<comment type="function">
    <text evidence="5 6">Major mediator of the tumor suppressor activity of IFN in breast cancer cells. Promotes ubiquitination and subsequent degradation of MDM2, which leads to p53/TP53 stabilization. Promotes ubiquitination and subsequent degradation of HDAC1, which in turn enhances maspin expression, and impairs invasive activity of cancer cells.</text>
</comment>
<comment type="subunit">
    <text evidence="5">Interacts with MDM2.</text>
</comment>
<comment type="subcellular location">
    <molecule>Isoform 1</molecule>
    <subcellularLocation>
        <location>Nucleus</location>
        <location>Nucleoplasm</location>
    </subcellularLocation>
</comment>
<comment type="subcellular location">
    <molecule>Isoform 3</molecule>
    <subcellularLocation>
        <location>Nucleus</location>
        <location>Nucleoplasm</location>
    </subcellularLocation>
</comment>
<comment type="subcellular location">
    <molecule>Isoform 5</molecule>
    <subcellularLocation>
        <location>Nucleus</location>
    </subcellularLocation>
    <subcellularLocation>
        <location>Nucleus speckle</location>
    </subcellularLocation>
</comment>
<comment type="alternative products">
    <event type="alternative splicing"/>
    <isoform>
        <id>Q6K0P9-1</id>
        <name>1</name>
        <name>alpha1</name>
        <sequence type="displayed"/>
    </isoform>
    <isoform>
        <id>Q6K0P9-2</id>
        <name>2</name>
        <name>alpha2</name>
        <sequence type="described" ref="VSP_033657"/>
    </isoform>
    <isoform>
        <id>Q6K0P9-3</id>
        <name>3</name>
        <name>beta1</name>
        <sequence type="described" ref="VSP_033660"/>
    </isoform>
    <isoform>
        <id>Q6K0P9-4</id>
        <name>4</name>
        <name>beta2</name>
        <sequence type="described" ref="VSP_033657 VSP_033660"/>
    </isoform>
    <isoform>
        <id>Q6K0P9-5</id>
        <name>5</name>
        <name>gamma1</name>
        <sequence type="described" ref="VSP_033658 VSP_033659"/>
    </isoform>
    <isoform>
        <id>Q6K0P9-6</id>
        <name>6</name>
        <name>gamma2</name>
        <sequence type="described" ref="VSP_033657 VSP_033658 VSP_033659"/>
    </isoform>
</comment>
<comment type="tissue specificity">
    <text evidence="4">Expressed in spleen, lymph node and peripheral blood leukocytes, and at lower levels in thymus, bone marrow and fetal liver. Down-regulated in breast tumors.</text>
</comment>
<comment type="induction">
    <text evidence="4">By IFN-alphas and IFNG/IFN-gamma in hematopoietic cancer cells.</text>
</comment>
<comment type="domain">
    <text>The HIN-200 domain mediates interaction with MDM2.</text>
</comment>
<comment type="similarity">
    <text evidence="9">Belongs to the HIN-200 family.</text>
</comment>
<protein>
    <recommendedName>
        <fullName>Pyrin and HIN domain-containing protein 1</fullName>
    </recommendedName>
    <alternativeName>
        <fullName>Interferon-inducible protein X</fullName>
    </alternativeName>
</protein>
<feature type="chain" id="PRO_0000334524" description="Pyrin and HIN domain-containing protein 1">
    <location>
        <begin position="1"/>
        <end position="492"/>
    </location>
</feature>
<feature type="domain" description="Pyrin" evidence="1">
    <location>
        <begin position="1"/>
        <end position="88"/>
    </location>
</feature>
<feature type="domain" description="HIN-200" evidence="2">
    <location>
        <begin position="199"/>
        <end position="399"/>
    </location>
</feature>
<feature type="region of interest" description="Disordered" evidence="3">
    <location>
        <begin position="106"/>
        <end position="199"/>
    </location>
</feature>
<feature type="region of interest" description="Disordered" evidence="3">
    <location>
        <begin position="400"/>
        <end position="492"/>
    </location>
</feature>
<feature type="compositionally biased region" description="Basic and acidic residues" evidence="3">
    <location>
        <begin position="142"/>
        <end position="159"/>
    </location>
</feature>
<feature type="compositionally biased region" description="Polar residues" evidence="3">
    <location>
        <begin position="160"/>
        <end position="173"/>
    </location>
</feature>
<feature type="compositionally biased region" description="Low complexity" evidence="3">
    <location>
        <begin position="181"/>
        <end position="194"/>
    </location>
</feature>
<feature type="compositionally biased region" description="Polar residues" evidence="3">
    <location>
        <begin position="416"/>
        <end position="432"/>
    </location>
</feature>
<feature type="compositionally biased region" description="Polar residues" evidence="3">
    <location>
        <begin position="460"/>
        <end position="492"/>
    </location>
</feature>
<feature type="splice variant" id="VSP_033657" description="In isoform 2, isoform 4 and isoform 6." evidence="7 8">
    <location>
        <begin position="89"/>
        <end position="97"/>
    </location>
</feature>
<feature type="splice variant" id="VSP_033658" description="In isoform 5 and isoform 6." evidence="7 8">
    <original>SLKPLANRHATASKNIFREDPIIAMVLNATKVFKYESSENEQRRMFHATVAT</original>
    <variation>AYLMNLTLSLTAGSFLSCAVWGRDRELRNLELSATDSLSTAPIYYTPIPFAH</variation>
    <location>
        <begin position="194"/>
        <end position="245"/>
    </location>
</feature>
<feature type="splice variant" id="VSP_033659" description="In isoform 5 and isoform 6." evidence="7 8">
    <location>
        <begin position="246"/>
        <end position="492"/>
    </location>
</feature>
<feature type="splice variant" id="VSP_033660" description="In isoform 3 and isoform 4." evidence="7 8">
    <original>KDETHPGAQSSPANFRITSPTVAPPLSSDTSTNRHPAVP</original>
    <variation>VTKDKDIK</variation>
    <location>
        <begin position="454"/>
        <end position="492"/>
    </location>
</feature>
<gene>
    <name type="primary">PYHIN1</name>
    <name type="synonym">IFIX</name>
</gene>
<keyword id="KW-0025">Alternative splicing</keyword>
<keyword id="KW-0131">Cell cycle</keyword>
<keyword id="KW-0539">Nucleus</keyword>
<keyword id="KW-1267">Proteomics identification</keyword>
<keyword id="KW-1185">Reference proteome</keyword>
<keyword id="KW-0043">Tumor suppressor</keyword>
<organism>
    <name type="scientific">Homo sapiens</name>
    <name type="common">Human</name>
    <dbReference type="NCBI Taxonomy" id="9606"/>
    <lineage>
        <taxon>Eukaryota</taxon>
        <taxon>Metazoa</taxon>
        <taxon>Chordata</taxon>
        <taxon>Craniata</taxon>
        <taxon>Vertebrata</taxon>
        <taxon>Euteleostomi</taxon>
        <taxon>Mammalia</taxon>
        <taxon>Eutheria</taxon>
        <taxon>Euarchontoglires</taxon>
        <taxon>Primates</taxon>
        <taxon>Haplorrhini</taxon>
        <taxon>Catarrhini</taxon>
        <taxon>Hominidae</taxon>
        <taxon>Homo</taxon>
    </lineage>
</organism>
<dbReference type="EMBL" id="AY185344">
    <property type="protein sequence ID" value="AAO67506.1"/>
    <property type="molecule type" value="mRNA"/>
</dbReference>
<dbReference type="EMBL" id="AY185345">
    <property type="protein sequence ID" value="AAO67507.1"/>
    <property type="molecule type" value="mRNA"/>
</dbReference>
<dbReference type="EMBL" id="AY185346">
    <property type="protein sequence ID" value="AAO67508.1"/>
    <property type="molecule type" value="mRNA"/>
</dbReference>
<dbReference type="EMBL" id="AY185347">
    <property type="protein sequence ID" value="AAO67509.1"/>
    <property type="molecule type" value="mRNA"/>
</dbReference>
<dbReference type="EMBL" id="AL359753">
    <property type="status" value="NOT_ANNOTATED_CDS"/>
    <property type="molecule type" value="Genomic_DNA"/>
</dbReference>
<dbReference type="EMBL" id="CH471121">
    <property type="protein sequence ID" value="EAW52805.1"/>
    <property type="molecule type" value="Genomic_DNA"/>
</dbReference>
<dbReference type="EMBL" id="BC020822">
    <property type="protein sequence ID" value="AAH20822.1"/>
    <property type="molecule type" value="mRNA"/>
</dbReference>
<dbReference type="EMBL" id="BC090944">
    <property type="protein sequence ID" value="AAH90944.1"/>
    <property type="molecule type" value="mRNA"/>
</dbReference>
<dbReference type="EMBL" id="BC139741">
    <property type="protein sequence ID" value="AAI39742.1"/>
    <property type="molecule type" value="mRNA"/>
</dbReference>
<dbReference type="CCDS" id="CCDS1178.1">
    <molecule id="Q6K0P9-1"/>
</dbReference>
<dbReference type="CCDS" id="CCDS1179.1">
    <molecule id="Q6K0P9-2"/>
</dbReference>
<dbReference type="CCDS" id="CCDS30907.1">
    <molecule id="Q6K0P9-3"/>
</dbReference>
<dbReference type="CCDS" id="CCDS30908.1">
    <molecule id="Q6K0P9-4"/>
</dbReference>
<dbReference type="CCDS" id="CCDS91077.1">
    <molecule id="Q6K0P9-5"/>
</dbReference>
<dbReference type="RefSeq" id="NP_001397815.1">
    <molecule id="Q6K0P9-5"/>
    <property type="nucleotide sequence ID" value="NM_001410886.1"/>
</dbReference>
<dbReference type="RefSeq" id="NP_689714.2">
    <molecule id="Q6K0P9-1"/>
    <property type="nucleotide sequence ID" value="NM_152501.4"/>
</dbReference>
<dbReference type="RefSeq" id="NP_945146.1">
    <molecule id="Q6K0P9-2"/>
    <property type="nucleotide sequence ID" value="NM_198928.5"/>
</dbReference>
<dbReference type="RefSeq" id="NP_945147.1">
    <molecule id="Q6K0P9-3"/>
    <property type="nucleotide sequence ID" value="NM_198929.5"/>
</dbReference>
<dbReference type="RefSeq" id="NP_945148.1">
    <molecule id="Q6K0P9-4"/>
    <property type="nucleotide sequence ID" value="NM_198930.4"/>
</dbReference>
<dbReference type="RefSeq" id="XP_005244987.1">
    <property type="nucleotide sequence ID" value="XM_005244930.1"/>
</dbReference>
<dbReference type="RefSeq" id="XP_011507544.1">
    <molecule id="Q6K0P9-1"/>
    <property type="nucleotide sequence ID" value="XM_011509242.3"/>
</dbReference>
<dbReference type="SMR" id="Q6K0P9"/>
<dbReference type="BioGRID" id="127225">
    <property type="interactions" value="360"/>
</dbReference>
<dbReference type="FunCoup" id="Q6K0P9">
    <property type="interactions" value="28"/>
</dbReference>
<dbReference type="IntAct" id="Q6K0P9">
    <property type="interactions" value="122"/>
</dbReference>
<dbReference type="STRING" id="9606.ENSP00000357122"/>
<dbReference type="GlyGen" id="Q6K0P9">
    <property type="glycosylation" value="2 sites, 1 O-linked glycan (1 site)"/>
</dbReference>
<dbReference type="iPTMnet" id="Q6K0P9"/>
<dbReference type="PhosphoSitePlus" id="Q6K0P9"/>
<dbReference type="SwissPalm" id="Q6K0P9"/>
<dbReference type="BioMuta" id="PYHIN1"/>
<dbReference type="DMDM" id="74748871"/>
<dbReference type="jPOST" id="Q6K0P9"/>
<dbReference type="MassIVE" id="Q6K0P9"/>
<dbReference type="PaxDb" id="9606-ENSP00000357122"/>
<dbReference type="PeptideAtlas" id="Q6K0P9"/>
<dbReference type="ProteomicsDB" id="66529">
    <molecule id="Q6K0P9-1"/>
</dbReference>
<dbReference type="ProteomicsDB" id="66530">
    <molecule id="Q6K0P9-2"/>
</dbReference>
<dbReference type="ProteomicsDB" id="66531">
    <molecule id="Q6K0P9-3"/>
</dbReference>
<dbReference type="ProteomicsDB" id="66532">
    <molecule id="Q6K0P9-4"/>
</dbReference>
<dbReference type="ProteomicsDB" id="66533">
    <molecule id="Q6K0P9-5"/>
</dbReference>
<dbReference type="ProteomicsDB" id="66534">
    <molecule id="Q6K0P9-6"/>
</dbReference>
<dbReference type="Antibodypedia" id="34255">
    <property type="antibodies" value="115 antibodies from 18 providers"/>
</dbReference>
<dbReference type="DNASU" id="149628"/>
<dbReference type="Ensembl" id="ENST00000368135.4">
    <molecule id="Q6K0P9-5"/>
    <property type="protein sequence ID" value="ENSP00000357117.4"/>
    <property type="gene ID" value="ENSG00000163564.15"/>
</dbReference>
<dbReference type="Ensembl" id="ENST00000368138.7">
    <molecule id="Q6K0P9-2"/>
    <property type="protein sequence ID" value="ENSP00000357120.3"/>
    <property type="gene ID" value="ENSG00000163564.15"/>
</dbReference>
<dbReference type="Ensembl" id="ENST00000368140.6">
    <molecule id="Q6K0P9-1"/>
    <property type="protein sequence ID" value="ENSP00000357122.1"/>
    <property type="gene ID" value="ENSG00000163564.15"/>
</dbReference>
<dbReference type="Ensembl" id="ENST00000392252.7">
    <molecule id="Q6K0P9-4"/>
    <property type="protein sequence ID" value="ENSP00000376082.3"/>
    <property type="gene ID" value="ENSG00000163564.15"/>
</dbReference>
<dbReference type="Ensembl" id="ENST00000392254.6">
    <molecule id="Q6K0P9-3"/>
    <property type="protein sequence ID" value="ENSP00000376083.2"/>
    <property type="gene ID" value="ENSG00000163564.15"/>
</dbReference>
<dbReference type="GeneID" id="149628"/>
<dbReference type="KEGG" id="hsa:149628"/>
<dbReference type="MANE-Select" id="ENST00000368140.6">
    <property type="protein sequence ID" value="ENSP00000357122.1"/>
    <property type="RefSeq nucleotide sequence ID" value="NM_152501.5"/>
    <property type="RefSeq protein sequence ID" value="NP_689714.2"/>
</dbReference>
<dbReference type="UCSC" id="uc001fta.5">
    <molecule id="Q6K0P9-1"/>
    <property type="organism name" value="human"/>
</dbReference>
<dbReference type="AGR" id="HGNC:28894"/>
<dbReference type="CTD" id="149628"/>
<dbReference type="DisGeNET" id="149628"/>
<dbReference type="GeneCards" id="PYHIN1"/>
<dbReference type="HGNC" id="HGNC:28894">
    <property type="gene designation" value="PYHIN1"/>
</dbReference>
<dbReference type="HPA" id="ENSG00000163564">
    <property type="expression patterns" value="Tissue enriched (lymphoid)"/>
</dbReference>
<dbReference type="MalaCards" id="PYHIN1"/>
<dbReference type="MIM" id="612677">
    <property type="type" value="gene"/>
</dbReference>
<dbReference type="neXtProt" id="NX_Q6K0P9"/>
<dbReference type="OpenTargets" id="ENSG00000163564"/>
<dbReference type="PharmGKB" id="PA134967485"/>
<dbReference type="VEuPathDB" id="HostDB:ENSG00000163564"/>
<dbReference type="eggNOG" id="ENOG502QTQS">
    <property type="taxonomic scope" value="Eukaryota"/>
</dbReference>
<dbReference type="GeneTree" id="ENSGT00390000013296"/>
<dbReference type="HOGENOM" id="CLU_020123_2_0_1"/>
<dbReference type="InParanoid" id="Q6K0P9"/>
<dbReference type="OMA" id="TKQRSHD"/>
<dbReference type="OrthoDB" id="9622064at2759"/>
<dbReference type="PAN-GO" id="Q6K0P9">
    <property type="GO annotations" value="5 GO annotations based on evolutionary models"/>
</dbReference>
<dbReference type="PhylomeDB" id="Q6K0P9"/>
<dbReference type="TreeFam" id="TF337385"/>
<dbReference type="PathwayCommons" id="Q6K0P9"/>
<dbReference type="SignaLink" id="Q6K0P9"/>
<dbReference type="SIGNOR" id="Q6K0P9"/>
<dbReference type="BioGRID-ORCS" id="149628">
    <property type="hits" value="2 hits in 1140 CRISPR screens"/>
</dbReference>
<dbReference type="ChiTaRS" id="PYHIN1">
    <property type="organism name" value="human"/>
</dbReference>
<dbReference type="GenomeRNAi" id="149628"/>
<dbReference type="Pharos" id="Q6K0P9">
    <property type="development level" value="Tbio"/>
</dbReference>
<dbReference type="PRO" id="PR:Q6K0P9"/>
<dbReference type="Proteomes" id="UP000005640">
    <property type="component" value="Chromosome 1"/>
</dbReference>
<dbReference type="RNAct" id="Q6K0P9">
    <property type="molecule type" value="protein"/>
</dbReference>
<dbReference type="Bgee" id="ENSG00000163564">
    <property type="expression patterns" value="Expressed in granulocyte and 112 other cell types or tissues"/>
</dbReference>
<dbReference type="ExpressionAtlas" id="Q6K0P9">
    <property type="expression patterns" value="baseline and differential"/>
</dbReference>
<dbReference type="GO" id="GO:0005829">
    <property type="term" value="C:cytosol"/>
    <property type="evidence" value="ECO:0000318"/>
    <property type="project" value="GO_Central"/>
</dbReference>
<dbReference type="GO" id="GO:0016607">
    <property type="term" value="C:nuclear speck"/>
    <property type="evidence" value="ECO:0007669"/>
    <property type="project" value="UniProtKB-SubCell"/>
</dbReference>
<dbReference type="GO" id="GO:0005730">
    <property type="term" value="C:nucleolus"/>
    <property type="evidence" value="ECO:0000314"/>
    <property type="project" value="HPA"/>
</dbReference>
<dbReference type="GO" id="GO:0005654">
    <property type="term" value="C:nucleoplasm"/>
    <property type="evidence" value="ECO:0000314"/>
    <property type="project" value="HPA"/>
</dbReference>
<dbReference type="GO" id="GO:0032991">
    <property type="term" value="C:protein-containing complex"/>
    <property type="evidence" value="ECO:0000315"/>
    <property type="project" value="UniProtKB"/>
</dbReference>
<dbReference type="GO" id="GO:0003690">
    <property type="term" value="F:double-stranded DNA binding"/>
    <property type="evidence" value="ECO:0000318"/>
    <property type="project" value="GO_Central"/>
</dbReference>
<dbReference type="GO" id="GO:0031625">
    <property type="term" value="F:ubiquitin protein ligase binding"/>
    <property type="evidence" value="ECO:0000353"/>
    <property type="project" value="UniProtKB"/>
</dbReference>
<dbReference type="GO" id="GO:0002218">
    <property type="term" value="P:activation of innate immune response"/>
    <property type="evidence" value="ECO:0000318"/>
    <property type="project" value="GO_Central"/>
</dbReference>
<dbReference type="GO" id="GO:0035457">
    <property type="term" value="P:cellular response to interferon-alpha"/>
    <property type="evidence" value="ECO:0000315"/>
    <property type="project" value="UniProtKB"/>
</dbReference>
<dbReference type="GO" id="GO:0035458">
    <property type="term" value="P:cellular response to interferon-beta"/>
    <property type="evidence" value="ECO:0000318"/>
    <property type="project" value="GO_Central"/>
</dbReference>
<dbReference type="GO" id="GO:0043388">
    <property type="term" value="P:positive regulation of DNA binding"/>
    <property type="evidence" value="ECO:0000314"/>
    <property type="project" value="UniProtKB"/>
</dbReference>
<dbReference type="GO" id="GO:0043517">
    <property type="term" value="P:positive regulation of DNA damage response, signal transduction by p53 class mediator"/>
    <property type="evidence" value="ECO:0000314"/>
    <property type="project" value="UniProtKB"/>
</dbReference>
<dbReference type="GO" id="GO:0045893">
    <property type="term" value="P:positive regulation of DNA-templated transcription"/>
    <property type="evidence" value="ECO:0000314"/>
    <property type="project" value="UniProtKB"/>
</dbReference>
<dbReference type="GO" id="GO:1900182">
    <property type="term" value="P:positive regulation of protein localization to nucleus"/>
    <property type="evidence" value="ECO:0000314"/>
    <property type="project" value="UniProtKB"/>
</dbReference>
<dbReference type="GO" id="GO:2000060">
    <property type="term" value="P:positive regulation of ubiquitin-dependent protein catabolic process"/>
    <property type="evidence" value="ECO:0000314"/>
    <property type="project" value="UniProtKB"/>
</dbReference>
<dbReference type="GO" id="GO:0031648">
    <property type="term" value="P:protein destabilization"/>
    <property type="evidence" value="ECO:0000315"/>
    <property type="project" value="UniProtKB"/>
</dbReference>
<dbReference type="GO" id="GO:0050821">
    <property type="term" value="P:protein stabilization"/>
    <property type="evidence" value="ECO:0000315"/>
    <property type="project" value="UniProtKB"/>
</dbReference>
<dbReference type="CDD" id="cd08305">
    <property type="entry name" value="Pyrin"/>
    <property type="match status" value="1"/>
</dbReference>
<dbReference type="FunFam" id="1.10.533.10:FF:000011">
    <property type="entry name" value="Myeloid cell nuclear differentiation antigen"/>
    <property type="match status" value="1"/>
</dbReference>
<dbReference type="FunFam" id="2.40.50.140:FF:000101">
    <property type="entry name" value="Myeloid cell nuclear differentiation antigen"/>
    <property type="match status" value="1"/>
</dbReference>
<dbReference type="FunFam" id="2.40.50.140:FF:000105">
    <property type="entry name" value="Myeloid cell nuclear differentiation antigen"/>
    <property type="match status" value="1"/>
</dbReference>
<dbReference type="Gene3D" id="1.10.533.10">
    <property type="entry name" value="Death Domain, Fas"/>
    <property type="match status" value="1"/>
</dbReference>
<dbReference type="Gene3D" id="2.40.50.140">
    <property type="entry name" value="Nucleic acid-binding proteins"/>
    <property type="match status" value="2"/>
</dbReference>
<dbReference type="InterPro" id="IPR004020">
    <property type="entry name" value="DAPIN"/>
</dbReference>
<dbReference type="InterPro" id="IPR011029">
    <property type="entry name" value="DEATH-like_dom_sf"/>
</dbReference>
<dbReference type="InterPro" id="IPR040205">
    <property type="entry name" value="HIN-200"/>
</dbReference>
<dbReference type="InterPro" id="IPR004021">
    <property type="entry name" value="HIN200/IF120x"/>
</dbReference>
<dbReference type="InterPro" id="IPR012340">
    <property type="entry name" value="NA-bd_OB-fold"/>
</dbReference>
<dbReference type="PANTHER" id="PTHR12200">
    <property type="entry name" value="INTERFERON-INDUCIBLE PROTEIN AIM2 FAMILY MEMBER"/>
    <property type="match status" value="1"/>
</dbReference>
<dbReference type="PANTHER" id="PTHR12200:SF25">
    <property type="entry name" value="PYRIN AND HIN DOMAIN-CONTAINING PROTEIN 1"/>
    <property type="match status" value="1"/>
</dbReference>
<dbReference type="Pfam" id="PF02760">
    <property type="entry name" value="HIN"/>
    <property type="match status" value="1"/>
</dbReference>
<dbReference type="Pfam" id="PF02758">
    <property type="entry name" value="PYRIN"/>
    <property type="match status" value="1"/>
</dbReference>
<dbReference type="SMART" id="SM01289">
    <property type="entry name" value="PYRIN"/>
    <property type="match status" value="1"/>
</dbReference>
<dbReference type="SUPFAM" id="SSF159141">
    <property type="entry name" value="HIN-2000 domain-like"/>
    <property type="match status" value="2"/>
</dbReference>
<dbReference type="PROSITE" id="PS50824">
    <property type="entry name" value="DAPIN"/>
    <property type="match status" value="1"/>
</dbReference>
<dbReference type="PROSITE" id="PS50834">
    <property type="entry name" value="HIN_200"/>
    <property type="match status" value="1"/>
</dbReference>
<sequence length="492" mass="55065">MANNYKKIVLLKGLEVINDYHFRIVKSLLSNDLKLNPKMKEEYDKIQIADLMEEKFPGDAGLGKLIEFFKEIPTLGDLAETLKREKLKVANKIESIPVKGIIPSKKTKQKEVYPATPACTPSNRLTAKGAEETLGPQKRKKPSEEETGTKRSKMSKEQTRPSCSAGASTSTAMGRSPPPQTSSSAPPNTSSTESLKPLANRHATASKNIFREDPIIAMVLNATKVFKYESSENEQRRMFHATVATQTQFFHVKVLNINLKRKFIKKRIIIISNYSKRNSLLEVNEASSVSEAGPDQTFEVPKDIIRRAKKIPKINILHKQTSGYIVYGLFMLHTKIVNRKTTIYEIQDKTGSMAVVGKGECHNIPCEKGDKLRLFCFRLRKRENMSKLMSEMHSFIQIQKNTNQRSHDSRSMALPQEQSQHPKPSEASTTLPESHLKTPQMPPTTPSSSSFTKKDETHPGAQSSPANFRITSPTVAPPLSSDTSTNRHPAVP</sequence>
<accession>Q6K0P9</accession>
<accession>Q5T3W6</accession>
<accession>Q6K0P6</accession>
<accession>Q6K0P7</accession>
<accession>Q6K0P8</accession>
<accession>Q8WW65</accession>
<proteinExistence type="evidence at protein level"/>
<reference key="1">
    <citation type="journal article" date="2004" name="Oncogene">
        <title>Antitumor activity of IFIX, a novel interferon-inducible HIN-200 gene, in breast cancer.</title>
        <authorList>
            <person name="Ding Y."/>
            <person name="Wang L."/>
            <person name="Su L.-K."/>
            <person name="Frey J.A."/>
            <person name="Shao R."/>
            <person name="Hunt K.K."/>
            <person name="Yan D.-H."/>
        </authorList>
    </citation>
    <scope>NUCLEOTIDE SEQUENCE [MRNA] (ISOFORMS 1; 2; 3; 4 AND 5)</scope>
    <scope>SUBCELLULAR LOCATION</scope>
    <scope>INDUCTION BY IFN</scope>
    <scope>TISSUE SPECIFICITY</scope>
</reference>
<reference key="2">
    <citation type="journal article" date="2006" name="Nature">
        <title>The DNA sequence and biological annotation of human chromosome 1.</title>
        <authorList>
            <person name="Gregory S.G."/>
            <person name="Barlow K.F."/>
            <person name="McLay K.E."/>
            <person name="Kaul R."/>
            <person name="Swarbreck D."/>
            <person name="Dunham A."/>
            <person name="Scott C.E."/>
            <person name="Howe K.L."/>
            <person name="Woodfine K."/>
            <person name="Spencer C.C.A."/>
            <person name="Jones M.C."/>
            <person name="Gillson C."/>
            <person name="Searle S."/>
            <person name="Zhou Y."/>
            <person name="Kokocinski F."/>
            <person name="McDonald L."/>
            <person name="Evans R."/>
            <person name="Phillips K."/>
            <person name="Atkinson A."/>
            <person name="Cooper R."/>
            <person name="Jones C."/>
            <person name="Hall R.E."/>
            <person name="Andrews T.D."/>
            <person name="Lloyd C."/>
            <person name="Ainscough R."/>
            <person name="Almeida J.P."/>
            <person name="Ambrose K.D."/>
            <person name="Anderson F."/>
            <person name="Andrew R.W."/>
            <person name="Ashwell R.I.S."/>
            <person name="Aubin K."/>
            <person name="Babbage A.K."/>
            <person name="Bagguley C.L."/>
            <person name="Bailey J."/>
            <person name="Beasley H."/>
            <person name="Bethel G."/>
            <person name="Bird C.P."/>
            <person name="Bray-Allen S."/>
            <person name="Brown J.Y."/>
            <person name="Brown A.J."/>
            <person name="Buckley D."/>
            <person name="Burton J."/>
            <person name="Bye J."/>
            <person name="Carder C."/>
            <person name="Chapman J.C."/>
            <person name="Clark S.Y."/>
            <person name="Clarke G."/>
            <person name="Clee C."/>
            <person name="Cobley V."/>
            <person name="Collier R.E."/>
            <person name="Corby N."/>
            <person name="Coville G.J."/>
            <person name="Davies J."/>
            <person name="Deadman R."/>
            <person name="Dunn M."/>
            <person name="Earthrowl M."/>
            <person name="Ellington A.G."/>
            <person name="Errington H."/>
            <person name="Frankish A."/>
            <person name="Frankland J."/>
            <person name="French L."/>
            <person name="Garner P."/>
            <person name="Garnett J."/>
            <person name="Gay L."/>
            <person name="Ghori M.R.J."/>
            <person name="Gibson R."/>
            <person name="Gilby L.M."/>
            <person name="Gillett W."/>
            <person name="Glithero R.J."/>
            <person name="Grafham D.V."/>
            <person name="Griffiths C."/>
            <person name="Griffiths-Jones S."/>
            <person name="Grocock R."/>
            <person name="Hammond S."/>
            <person name="Harrison E.S.I."/>
            <person name="Hart E."/>
            <person name="Haugen E."/>
            <person name="Heath P.D."/>
            <person name="Holmes S."/>
            <person name="Holt K."/>
            <person name="Howden P.J."/>
            <person name="Hunt A.R."/>
            <person name="Hunt S.E."/>
            <person name="Hunter G."/>
            <person name="Isherwood J."/>
            <person name="James R."/>
            <person name="Johnson C."/>
            <person name="Johnson D."/>
            <person name="Joy A."/>
            <person name="Kay M."/>
            <person name="Kershaw J.K."/>
            <person name="Kibukawa M."/>
            <person name="Kimberley A.M."/>
            <person name="King A."/>
            <person name="Knights A.J."/>
            <person name="Lad H."/>
            <person name="Laird G."/>
            <person name="Lawlor S."/>
            <person name="Leongamornlert D.A."/>
            <person name="Lloyd D.M."/>
            <person name="Loveland J."/>
            <person name="Lovell J."/>
            <person name="Lush M.J."/>
            <person name="Lyne R."/>
            <person name="Martin S."/>
            <person name="Mashreghi-Mohammadi M."/>
            <person name="Matthews L."/>
            <person name="Matthews N.S.W."/>
            <person name="McLaren S."/>
            <person name="Milne S."/>
            <person name="Mistry S."/>
            <person name="Moore M.J.F."/>
            <person name="Nickerson T."/>
            <person name="O'Dell C.N."/>
            <person name="Oliver K."/>
            <person name="Palmeiri A."/>
            <person name="Palmer S.A."/>
            <person name="Parker A."/>
            <person name="Patel D."/>
            <person name="Pearce A.V."/>
            <person name="Peck A.I."/>
            <person name="Pelan S."/>
            <person name="Phelps K."/>
            <person name="Phillimore B.J."/>
            <person name="Plumb R."/>
            <person name="Rajan J."/>
            <person name="Raymond C."/>
            <person name="Rouse G."/>
            <person name="Saenphimmachak C."/>
            <person name="Sehra H.K."/>
            <person name="Sheridan E."/>
            <person name="Shownkeen R."/>
            <person name="Sims S."/>
            <person name="Skuce C.D."/>
            <person name="Smith M."/>
            <person name="Steward C."/>
            <person name="Subramanian S."/>
            <person name="Sycamore N."/>
            <person name="Tracey A."/>
            <person name="Tromans A."/>
            <person name="Van Helmond Z."/>
            <person name="Wall M."/>
            <person name="Wallis J.M."/>
            <person name="White S."/>
            <person name="Whitehead S.L."/>
            <person name="Wilkinson J.E."/>
            <person name="Willey D.L."/>
            <person name="Williams H."/>
            <person name="Wilming L."/>
            <person name="Wray P.W."/>
            <person name="Wu Z."/>
            <person name="Coulson A."/>
            <person name="Vaudin M."/>
            <person name="Sulston J.E."/>
            <person name="Durbin R.M."/>
            <person name="Hubbard T."/>
            <person name="Wooster R."/>
            <person name="Dunham I."/>
            <person name="Carter N.P."/>
            <person name="McVean G."/>
            <person name="Ross M.T."/>
            <person name="Harrow J."/>
            <person name="Olson M.V."/>
            <person name="Beck S."/>
            <person name="Rogers J."/>
            <person name="Bentley D.R."/>
        </authorList>
    </citation>
    <scope>NUCLEOTIDE SEQUENCE [LARGE SCALE GENOMIC DNA]</scope>
</reference>
<reference key="3">
    <citation type="submission" date="2005-09" db="EMBL/GenBank/DDBJ databases">
        <authorList>
            <person name="Mural R.J."/>
            <person name="Istrail S."/>
            <person name="Sutton G.G."/>
            <person name="Florea L."/>
            <person name="Halpern A.L."/>
            <person name="Mobarry C.M."/>
            <person name="Lippert R."/>
            <person name="Walenz B."/>
            <person name="Shatkay H."/>
            <person name="Dew I."/>
            <person name="Miller J.R."/>
            <person name="Flanigan M.J."/>
            <person name="Edwards N.J."/>
            <person name="Bolanos R."/>
            <person name="Fasulo D."/>
            <person name="Halldorsson B.V."/>
            <person name="Hannenhalli S."/>
            <person name="Turner R."/>
            <person name="Yooseph S."/>
            <person name="Lu F."/>
            <person name="Nusskern D.R."/>
            <person name="Shue B.C."/>
            <person name="Zheng X.H."/>
            <person name="Zhong F."/>
            <person name="Delcher A.L."/>
            <person name="Huson D.H."/>
            <person name="Kravitz S.A."/>
            <person name="Mouchard L."/>
            <person name="Reinert K."/>
            <person name="Remington K.A."/>
            <person name="Clark A.G."/>
            <person name="Waterman M.S."/>
            <person name="Eichler E.E."/>
            <person name="Adams M.D."/>
            <person name="Hunkapiller M.W."/>
            <person name="Myers E.W."/>
            <person name="Venter J.C."/>
        </authorList>
    </citation>
    <scope>NUCLEOTIDE SEQUENCE [LARGE SCALE GENOMIC DNA]</scope>
</reference>
<reference key="4">
    <citation type="journal article" date="2004" name="Genome Res.">
        <title>The status, quality, and expansion of the NIH full-length cDNA project: the Mammalian Gene Collection (MGC).</title>
        <authorList>
            <consortium name="The MGC Project Team"/>
        </authorList>
    </citation>
    <scope>NUCLEOTIDE SEQUENCE [LARGE SCALE MRNA] (ISOFORMS 2; 3 AND 6)</scope>
    <source>
        <tissue>Lung</tissue>
    </source>
</reference>
<reference key="5">
    <citation type="journal article" date="2006" name="Mol. Cell. Biol.">
        <title>Interferon-inducible protein IFIXalpha1 functions as a negative regulator of HDM2.</title>
        <authorList>
            <person name="Ding Y."/>
            <person name="Lee J.-F."/>
            <person name="Lu H."/>
            <person name="Lee M.-H."/>
            <person name="Yan D.-H."/>
        </authorList>
    </citation>
    <scope>FUNCTION</scope>
    <scope>INTERACTION WITH MDM2</scope>
</reference>
<reference key="6">
    <citation type="journal article" date="2008" name="Mol. Carcinog.">
        <title>Interferon-inducible protein IFIXalpha inhibits cell invasion by upregulating the metastasis suppressor maspin.</title>
        <authorList>
            <person name="Yamaguchi H."/>
            <person name="Ding Y."/>
            <person name="Lee J.-F."/>
            <person name="Zhang M."/>
            <person name="Pal A."/>
            <person name="Bornmann W."/>
            <person name="Yan D.-H."/>
            <person name="Hung M.-C."/>
        </authorList>
    </citation>
    <scope>FUNCTION</scope>
</reference>
<name>IFIX_HUMAN</name>
<evidence type="ECO:0000255" key="1">
    <source>
        <dbReference type="PROSITE-ProRule" id="PRU00061"/>
    </source>
</evidence>
<evidence type="ECO:0000255" key="2">
    <source>
        <dbReference type="PROSITE-ProRule" id="PRU00106"/>
    </source>
</evidence>
<evidence type="ECO:0000256" key="3">
    <source>
        <dbReference type="SAM" id="MobiDB-lite"/>
    </source>
</evidence>
<evidence type="ECO:0000269" key="4">
    <source>
    </source>
</evidence>
<evidence type="ECO:0000269" key="5">
    <source>
    </source>
</evidence>
<evidence type="ECO:0000269" key="6">
    <source>
    </source>
</evidence>
<evidence type="ECO:0000303" key="7">
    <source>
    </source>
</evidence>
<evidence type="ECO:0000303" key="8">
    <source>
    </source>
</evidence>
<evidence type="ECO:0000305" key="9"/>